<feature type="chain" id="PRO_0000090846" description="Probable sulfoacetaldehyde acetyltransferase">
    <location>
        <begin position="1"/>
        <end position="591"/>
    </location>
</feature>
<feature type="region of interest" description="Disordered" evidence="3">
    <location>
        <begin position="359"/>
        <end position="383"/>
    </location>
</feature>
<sequence length="591" mass="64157">MKMTTEEAFVKVLQMHGIEHAFGIIGSAMMPVSDLFPKAGIRFWDCAHETNAGMMADGFSRATGTMSMAIGQNGPGVTGFITAMKTAYWNHTPLLMVTPQAANKTIGQGGFQEVDQMAMFEEMVCYQEEVRDPSRIPEVLNRVIEKAWRGCAPAQINIPRDFWTQVIDVDLPRIVRFERPAGGPAAIAQAARLLSEAKFPVILNGAGVVIGNAIQESMALAEKLDAPVCCGYQHNDAFPGSHRLSVGPLGYNGSKAAMELISKADVVLALGTRLNPFSTLPGYGIDYWPKDAAIIQVDINADRIGLTKKVTVGICGDAKQVAQQILQQLAPAAGDASREERKALVHQTRSAWLQQLSSMDHEDDDPGTEWNVGARQREPDRMSPRQVWRAIQAVLPKEAIISTDIGNNCAIGNAYPSFEQGRKYLAPGMFGPCGYGFPSIVGAKIGCPDVPVVGFAGDGAFGISMNEMTSIGREGWPAITMVIFRNYQWGAEKRNTTLWYDNNFVGTELNPNLSYAKVADGCGLKGVTVDTPAALTEALAKAIEDQAKGITTFVEVVLNQELGEPFRRDAMKKPVAVAGIDRADMRTQRRM</sequence>
<evidence type="ECO:0000250" key="1"/>
<evidence type="ECO:0000250" key="2">
    <source>
        <dbReference type="UniProtKB" id="Q84H44"/>
    </source>
</evidence>
<evidence type="ECO:0000256" key="3">
    <source>
        <dbReference type="SAM" id="MobiDB-lite"/>
    </source>
</evidence>
<evidence type="ECO:0000305" key="4"/>
<geneLocation type="plasmid">
    <name>pSymB</name>
    <name>megaplasmid 2</name>
</geneLocation>
<comment type="catalytic activity">
    <reaction>
        <text>acetyl phosphate + sulfite + H(+) = sulfoacetaldehyde + phosphate</text>
        <dbReference type="Rhea" id="RHEA:24204"/>
        <dbReference type="ChEBI" id="CHEBI:15378"/>
        <dbReference type="ChEBI" id="CHEBI:17359"/>
        <dbReference type="ChEBI" id="CHEBI:22191"/>
        <dbReference type="ChEBI" id="CHEBI:43474"/>
        <dbReference type="ChEBI" id="CHEBI:58246"/>
        <dbReference type="EC" id="2.3.3.15"/>
    </reaction>
</comment>
<comment type="cofactor">
    <cofactor evidence="2">
        <name>Mg(2+)</name>
        <dbReference type="ChEBI" id="CHEBI:18420"/>
    </cofactor>
</comment>
<comment type="cofactor">
    <cofactor evidence="2">
        <name>thiamine diphosphate</name>
        <dbReference type="ChEBI" id="CHEBI:58937"/>
    </cofactor>
</comment>
<comment type="pathway">
    <text>Organosulfur degradation; taurine degradation via aerobic pathway; acetyl phosphate and sulfite from taurine: step 2/2.</text>
</comment>
<comment type="subcellular location">
    <subcellularLocation>
        <location evidence="1">Cytoplasm</location>
    </subcellularLocation>
</comment>
<comment type="similarity">
    <text evidence="4">Belongs to the TPP enzyme family.</text>
</comment>
<reference key="1">
    <citation type="journal article" date="2001" name="Proc. Natl. Acad. Sci. U.S.A.">
        <title>The complete sequence of the 1,683-kb pSymB megaplasmid from the N2-fixing endosymbiont Sinorhizobium meliloti.</title>
        <authorList>
            <person name="Finan T.M."/>
            <person name="Weidner S."/>
            <person name="Wong K."/>
            <person name="Buhrmester J."/>
            <person name="Chain P."/>
            <person name="Vorhoelter F.J."/>
            <person name="Hernandez-Lucas I."/>
            <person name="Becker A."/>
            <person name="Cowie A."/>
            <person name="Gouzy J."/>
            <person name="Golding B."/>
            <person name="Puehler A."/>
        </authorList>
    </citation>
    <scope>NUCLEOTIDE SEQUENCE [LARGE SCALE GENOMIC DNA]</scope>
    <source>
        <strain>1021</strain>
    </source>
</reference>
<reference key="2">
    <citation type="journal article" date="2001" name="Science">
        <title>The composite genome of the legume symbiont Sinorhizobium meliloti.</title>
        <authorList>
            <person name="Galibert F."/>
            <person name="Finan T.M."/>
            <person name="Long S.R."/>
            <person name="Puehler A."/>
            <person name="Abola P."/>
            <person name="Ampe F."/>
            <person name="Barloy-Hubler F."/>
            <person name="Barnett M.J."/>
            <person name="Becker A."/>
            <person name="Boistard P."/>
            <person name="Bothe G."/>
            <person name="Boutry M."/>
            <person name="Bowser L."/>
            <person name="Buhrmester J."/>
            <person name="Cadieu E."/>
            <person name="Capela D."/>
            <person name="Chain P."/>
            <person name="Cowie A."/>
            <person name="Davis R.W."/>
            <person name="Dreano S."/>
            <person name="Federspiel N.A."/>
            <person name="Fisher R.F."/>
            <person name="Gloux S."/>
            <person name="Godrie T."/>
            <person name="Goffeau A."/>
            <person name="Golding B."/>
            <person name="Gouzy J."/>
            <person name="Gurjal M."/>
            <person name="Hernandez-Lucas I."/>
            <person name="Hong A."/>
            <person name="Huizar L."/>
            <person name="Hyman R.W."/>
            <person name="Jones T."/>
            <person name="Kahn D."/>
            <person name="Kahn M.L."/>
            <person name="Kalman S."/>
            <person name="Keating D.H."/>
            <person name="Kiss E."/>
            <person name="Komp C."/>
            <person name="Lelaure V."/>
            <person name="Masuy D."/>
            <person name="Palm C."/>
            <person name="Peck M.C."/>
            <person name="Pohl T.M."/>
            <person name="Portetelle D."/>
            <person name="Purnelle B."/>
            <person name="Ramsperger U."/>
            <person name="Surzycki R."/>
            <person name="Thebault P."/>
            <person name="Vandenbol M."/>
            <person name="Vorhoelter F.J."/>
            <person name="Weidner S."/>
            <person name="Wells D.H."/>
            <person name="Wong K."/>
            <person name="Yeh K.-C."/>
            <person name="Batut J."/>
        </authorList>
    </citation>
    <scope>NUCLEOTIDE SEQUENCE [LARGE SCALE GENOMIC DNA]</scope>
    <source>
        <strain>1021</strain>
    </source>
</reference>
<protein>
    <recommendedName>
        <fullName>Probable sulfoacetaldehyde acetyltransferase</fullName>
        <ecNumber>2.3.3.15</ecNumber>
    </recommendedName>
</protein>
<organism>
    <name type="scientific">Rhizobium meliloti (strain 1021)</name>
    <name type="common">Ensifer meliloti</name>
    <name type="synonym">Sinorhizobium meliloti</name>
    <dbReference type="NCBI Taxonomy" id="266834"/>
    <lineage>
        <taxon>Bacteria</taxon>
        <taxon>Pseudomonadati</taxon>
        <taxon>Pseudomonadota</taxon>
        <taxon>Alphaproteobacteria</taxon>
        <taxon>Hyphomicrobiales</taxon>
        <taxon>Rhizobiaceae</taxon>
        <taxon>Sinorhizobium/Ensifer group</taxon>
        <taxon>Sinorhizobium</taxon>
    </lineage>
</organism>
<proteinExistence type="inferred from homology"/>
<dbReference type="EC" id="2.3.3.15"/>
<dbReference type="EMBL" id="AL591985">
    <property type="protein sequence ID" value="CAC49370.1"/>
    <property type="molecule type" value="Genomic_DNA"/>
</dbReference>
<dbReference type="PIR" id="B95963">
    <property type="entry name" value="B95963"/>
</dbReference>
<dbReference type="RefSeq" id="NP_437510.1">
    <property type="nucleotide sequence ID" value="NC_003078.1"/>
</dbReference>
<dbReference type="RefSeq" id="WP_010975814.1">
    <property type="nucleotide sequence ID" value="NC_003078.1"/>
</dbReference>
<dbReference type="SMR" id="Q92UW6"/>
<dbReference type="EnsemblBacteria" id="CAC49370">
    <property type="protein sequence ID" value="CAC49370"/>
    <property type="gene ID" value="SM_b21530"/>
</dbReference>
<dbReference type="KEGG" id="sme:SM_b21530"/>
<dbReference type="PATRIC" id="fig|266834.11.peg.5897"/>
<dbReference type="eggNOG" id="COG0028">
    <property type="taxonomic scope" value="Bacteria"/>
</dbReference>
<dbReference type="HOGENOM" id="CLU_013748_3_1_5"/>
<dbReference type="OrthoDB" id="4494979at2"/>
<dbReference type="UniPathway" id="UPA00336">
    <property type="reaction ID" value="UER00544"/>
</dbReference>
<dbReference type="Proteomes" id="UP000001976">
    <property type="component" value="Plasmid pSymB"/>
</dbReference>
<dbReference type="GO" id="GO:0005948">
    <property type="term" value="C:acetolactate synthase complex"/>
    <property type="evidence" value="ECO:0007669"/>
    <property type="project" value="TreeGrafter"/>
</dbReference>
<dbReference type="GO" id="GO:0003984">
    <property type="term" value="F:acetolactate synthase activity"/>
    <property type="evidence" value="ECO:0007669"/>
    <property type="project" value="TreeGrafter"/>
</dbReference>
<dbReference type="GO" id="GO:0050660">
    <property type="term" value="F:flavin adenine dinucleotide binding"/>
    <property type="evidence" value="ECO:0007669"/>
    <property type="project" value="TreeGrafter"/>
</dbReference>
<dbReference type="GO" id="GO:0000287">
    <property type="term" value="F:magnesium ion binding"/>
    <property type="evidence" value="ECO:0007669"/>
    <property type="project" value="InterPro"/>
</dbReference>
<dbReference type="GO" id="GO:0050487">
    <property type="term" value="F:sulfoacetaldehyde acetyltransferase activity"/>
    <property type="evidence" value="ECO:0007669"/>
    <property type="project" value="UniProtKB-EC"/>
</dbReference>
<dbReference type="GO" id="GO:0030976">
    <property type="term" value="F:thiamine pyrophosphate binding"/>
    <property type="evidence" value="ECO:0007669"/>
    <property type="project" value="InterPro"/>
</dbReference>
<dbReference type="GO" id="GO:0009097">
    <property type="term" value="P:isoleucine biosynthetic process"/>
    <property type="evidence" value="ECO:0007669"/>
    <property type="project" value="TreeGrafter"/>
</dbReference>
<dbReference type="GO" id="GO:0009099">
    <property type="term" value="P:L-valine biosynthetic process"/>
    <property type="evidence" value="ECO:0007669"/>
    <property type="project" value="TreeGrafter"/>
</dbReference>
<dbReference type="GO" id="GO:0019529">
    <property type="term" value="P:taurine catabolic process"/>
    <property type="evidence" value="ECO:0007669"/>
    <property type="project" value="InterPro"/>
</dbReference>
<dbReference type="CDD" id="cd07035">
    <property type="entry name" value="TPP_PYR_POX_like"/>
    <property type="match status" value="1"/>
</dbReference>
<dbReference type="CDD" id="cd02013">
    <property type="entry name" value="TPP_Xsc_like"/>
    <property type="match status" value="1"/>
</dbReference>
<dbReference type="FunFam" id="3.40.50.970:FF:000107">
    <property type="entry name" value="Sulfoacetaldehyde acetyltransferase Xsc"/>
    <property type="match status" value="1"/>
</dbReference>
<dbReference type="Gene3D" id="3.40.50.970">
    <property type="match status" value="2"/>
</dbReference>
<dbReference type="Gene3D" id="3.40.50.1220">
    <property type="entry name" value="TPP-binding domain"/>
    <property type="match status" value="1"/>
</dbReference>
<dbReference type="InterPro" id="IPR029035">
    <property type="entry name" value="DHS-like_NAD/FAD-binding_dom"/>
</dbReference>
<dbReference type="InterPro" id="IPR017820">
    <property type="entry name" value="Sulphoacetald_Actrfrase"/>
</dbReference>
<dbReference type="InterPro" id="IPR029061">
    <property type="entry name" value="THDP-binding"/>
</dbReference>
<dbReference type="InterPro" id="IPR012000">
    <property type="entry name" value="Thiamin_PyroP_enz_cen_dom"/>
</dbReference>
<dbReference type="InterPro" id="IPR012001">
    <property type="entry name" value="Thiamin_PyroP_enz_TPP-bd_dom"/>
</dbReference>
<dbReference type="InterPro" id="IPR000399">
    <property type="entry name" value="TPP-bd_CS"/>
</dbReference>
<dbReference type="InterPro" id="IPR045229">
    <property type="entry name" value="TPP_enz"/>
</dbReference>
<dbReference type="InterPro" id="IPR011766">
    <property type="entry name" value="TPP_enzyme_TPP-bd"/>
</dbReference>
<dbReference type="NCBIfam" id="NF005713">
    <property type="entry name" value="PRK07525.1"/>
    <property type="match status" value="1"/>
</dbReference>
<dbReference type="NCBIfam" id="TIGR03457">
    <property type="entry name" value="sulphoacet_xsc"/>
    <property type="match status" value="1"/>
</dbReference>
<dbReference type="PANTHER" id="PTHR18968:SF13">
    <property type="entry name" value="ACETOLACTATE SYNTHASE CATALYTIC SUBUNIT, MITOCHONDRIAL"/>
    <property type="match status" value="1"/>
</dbReference>
<dbReference type="PANTHER" id="PTHR18968">
    <property type="entry name" value="THIAMINE PYROPHOSPHATE ENZYMES"/>
    <property type="match status" value="1"/>
</dbReference>
<dbReference type="Pfam" id="PF02775">
    <property type="entry name" value="TPP_enzyme_C"/>
    <property type="match status" value="1"/>
</dbReference>
<dbReference type="Pfam" id="PF00205">
    <property type="entry name" value="TPP_enzyme_M"/>
    <property type="match status" value="1"/>
</dbReference>
<dbReference type="Pfam" id="PF02776">
    <property type="entry name" value="TPP_enzyme_N"/>
    <property type="match status" value="1"/>
</dbReference>
<dbReference type="SUPFAM" id="SSF52467">
    <property type="entry name" value="DHS-like NAD/FAD-binding domain"/>
    <property type="match status" value="1"/>
</dbReference>
<dbReference type="SUPFAM" id="SSF52518">
    <property type="entry name" value="Thiamin diphosphate-binding fold (THDP-binding)"/>
    <property type="match status" value="2"/>
</dbReference>
<dbReference type="PROSITE" id="PS00187">
    <property type="entry name" value="TPP_ENZYMES"/>
    <property type="match status" value="1"/>
</dbReference>
<keyword id="KW-0012">Acyltransferase</keyword>
<keyword id="KW-0963">Cytoplasm</keyword>
<keyword id="KW-0460">Magnesium</keyword>
<keyword id="KW-0479">Metal-binding</keyword>
<keyword id="KW-0614">Plasmid</keyword>
<keyword id="KW-1185">Reference proteome</keyword>
<keyword id="KW-0786">Thiamine pyrophosphate</keyword>
<keyword id="KW-0808">Transferase</keyword>
<name>XSC_RHIME</name>
<accession>Q92UW6</accession>
<gene>
    <name type="primary">xsc</name>
    <name type="ordered locus">RB0970</name>
    <name type="ORF">SMb21530</name>
</gene>